<comment type="similarity">
    <text evidence="1">Belongs to the bacterial ribosomal protein bL33 family.</text>
</comment>
<feature type="chain" id="PRO_1000115149" description="Large ribosomal subunit protein bL33">
    <location>
        <begin position="1"/>
        <end position="62"/>
    </location>
</feature>
<organism>
    <name type="scientific">Porphyromonas gingivalis (strain ATCC 33277 / DSM 20709 / CIP 103683 / JCM 12257 / NCTC 11834 / 2561)</name>
    <dbReference type="NCBI Taxonomy" id="431947"/>
    <lineage>
        <taxon>Bacteria</taxon>
        <taxon>Pseudomonadati</taxon>
        <taxon>Bacteroidota</taxon>
        <taxon>Bacteroidia</taxon>
        <taxon>Bacteroidales</taxon>
        <taxon>Porphyromonadaceae</taxon>
        <taxon>Porphyromonas</taxon>
    </lineage>
</organism>
<keyword id="KW-0687">Ribonucleoprotein</keyword>
<keyword id="KW-0689">Ribosomal protein</keyword>
<dbReference type="EMBL" id="AP009380">
    <property type="protein sequence ID" value="BAG34409.1"/>
    <property type="molecule type" value="Genomic_DNA"/>
</dbReference>
<dbReference type="RefSeq" id="WP_004583623.1">
    <property type="nucleotide sequence ID" value="NZ_CP025930.1"/>
</dbReference>
<dbReference type="SMR" id="B2RM14"/>
<dbReference type="GeneID" id="57239614"/>
<dbReference type="KEGG" id="pgn:PGN_1890"/>
<dbReference type="eggNOG" id="COG0267">
    <property type="taxonomic scope" value="Bacteria"/>
</dbReference>
<dbReference type="HOGENOM" id="CLU_190949_3_0_10"/>
<dbReference type="OrthoDB" id="9801333at2"/>
<dbReference type="BioCyc" id="PGIN431947:G1G2V-2106-MONOMER"/>
<dbReference type="Proteomes" id="UP000008842">
    <property type="component" value="Chromosome"/>
</dbReference>
<dbReference type="GO" id="GO:0005737">
    <property type="term" value="C:cytoplasm"/>
    <property type="evidence" value="ECO:0007669"/>
    <property type="project" value="UniProtKB-ARBA"/>
</dbReference>
<dbReference type="GO" id="GO:1990904">
    <property type="term" value="C:ribonucleoprotein complex"/>
    <property type="evidence" value="ECO:0007669"/>
    <property type="project" value="UniProtKB-KW"/>
</dbReference>
<dbReference type="GO" id="GO:0005840">
    <property type="term" value="C:ribosome"/>
    <property type="evidence" value="ECO:0007669"/>
    <property type="project" value="UniProtKB-KW"/>
</dbReference>
<dbReference type="GO" id="GO:0003735">
    <property type="term" value="F:structural constituent of ribosome"/>
    <property type="evidence" value="ECO:0007669"/>
    <property type="project" value="InterPro"/>
</dbReference>
<dbReference type="GO" id="GO:0006412">
    <property type="term" value="P:translation"/>
    <property type="evidence" value="ECO:0007669"/>
    <property type="project" value="UniProtKB-UniRule"/>
</dbReference>
<dbReference type="Gene3D" id="2.20.28.120">
    <property type="entry name" value="Ribosomal protein L33"/>
    <property type="match status" value="1"/>
</dbReference>
<dbReference type="HAMAP" id="MF_00294">
    <property type="entry name" value="Ribosomal_bL33"/>
    <property type="match status" value="1"/>
</dbReference>
<dbReference type="InterPro" id="IPR001705">
    <property type="entry name" value="Ribosomal_bL33"/>
</dbReference>
<dbReference type="InterPro" id="IPR038584">
    <property type="entry name" value="Ribosomal_bL33_sf"/>
</dbReference>
<dbReference type="InterPro" id="IPR011332">
    <property type="entry name" value="Ribosomal_zn-bd"/>
</dbReference>
<dbReference type="NCBIfam" id="NF001764">
    <property type="entry name" value="PRK00504.1"/>
    <property type="match status" value="1"/>
</dbReference>
<dbReference type="NCBIfam" id="NF001860">
    <property type="entry name" value="PRK00595.1"/>
    <property type="match status" value="1"/>
</dbReference>
<dbReference type="NCBIfam" id="TIGR01023">
    <property type="entry name" value="rpmG_bact"/>
    <property type="match status" value="1"/>
</dbReference>
<dbReference type="PANTHER" id="PTHR43168">
    <property type="entry name" value="50S RIBOSOMAL PROTEIN L33, CHLOROPLASTIC"/>
    <property type="match status" value="1"/>
</dbReference>
<dbReference type="PANTHER" id="PTHR43168:SF2">
    <property type="entry name" value="LARGE RIBOSOMAL SUBUNIT PROTEIN BL33C"/>
    <property type="match status" value="1"/>
</dbReference>
<dbReference type="Pfam" id="PF00471">
    <property type="entry name" value="Ribosomal_L33"/>
    <property type="match status" value="1"/>
</dbReference>
<dbReference type="SUPFAM" id="SSF57829">
    <property type="entry name" value="Zn-binding ribosomal proteins"/>
    <property type="match status" value="1"/>
</dbReference>
<proteinExistence type="inferred from homology"/>
<name>RL33_PORG3</name>
<gene>
    <name evidence="1" type="primary">rpmG</name>
    <name type="ordered locus">PGN_1890</name>
</gene>
<protein>
    <recommendedName>
        <fullName evidence="1">Large ribosomal subunit protein bL33</fullName>
    </recommendedName>
    <alternativeName>
        <fullName evidence="2">50S ribosomal protein L33</fullName>
    </alternativeName>
</protein>
<sequence>MAKKVKGNRVQVILECTEHKESGMPGISRYITTKNRKNTTQRLELKKYNPILRRMTLHKEIK</sequence>
<reference key="1">
    <citation type="journal article" date="2008" name="DNA Res.">
        <title>Determination of the genome sequence of Porphyromonas gingivalis strain ATCC 33277 and genomic comparison with strain W83 revealed extensive genome rearrangements in P. gingivalis.</title>
        <authorList>
            <person name="Naito M."/>
            <person name="Hirakawa H."/>
            <person name="Yamashita A."/>
            <person name="Ohara N."/>
            <person name="Shoji M."/>
            <person name="Yukitake H."/>
            <person name="Nakayama K."/>
            <person name="Toh H."/>
            <person name="Yoshimura F."/>
            <person name="Kuhara S."/>
            <person name="Hattori M."/>
            <person name="Hayashi T."/>
            <person name="Nakayama K."/>
        </authorList>
    </citation>
    <scope>NUCLEOTIDE SEQUENCE [LARGE SCALE GENOMIC DNA]</scope>
    <source>
        <strain>ATCC 33277 / DSM 20709 / CIP 103683 / JCM 12257 / NCTC 11834 / 2561</strain>
    </source>
</reference>
<accession>B2RM14</accession>
<evidence type="ECO:0000255" key="1">
    <source>
        <dbReference type="HAMAP-Rule" id="MF_00294"/>
    </source>
</evidence>
<evidence type="ECO:0000305" key="2"/>